<accession>Q5RD69</accession>
<accession>Q5R5Q3</accession>
<protein>
    <recommendedName>
        <fullName>Testican-3</fullName>
    </recommendedName>
    <alternativeName>
        <fullName>SPARC/osteonectin, CWCV, and Kazal-like domains proteoglycan 3</fullName>
    </alternativeName>
</protein>
<keyword id="KW-0025">Alternative splicing</keyword>
<keyword id="KW-0106">Calcium</keyword>
<keyword id="KW-1015">Disulfide bond</keyword>
<keyword id="KW-0272">Extracellular matrix</keyword>
<keyword id="KW-0325">Glycoprotein</keyword>
<keyword id="KW-0357">Heparan sulfate</keyword>
<keyword id="KW-0481">Metalloenzyme inhibitor</keyword>
<keyword id="KW-0483">Metalloprotease inhibitor</keyword>
<keyword id="KW-0646">Protease inhibitor</keyword>
<keyword id="KW-0654">Proteoglycan</keyword>
<keyword id="KW-1185">Reference proteome</keyword>
<keyword id="KW-0964">Secreted</keyword>
<keyword id="KW-0732">Signal</keyword>
<dbReference type="EMBL" id="CR858048">
    <property type="protein sequence ID" value="CAH90288.1"/>
    <property type="molecule type" value="mRNA"/>
</dbReference>
<dbReference type="EMBL" id="CR860803">
    <property type="protein sequence ID" value="CAH92913.1"/>
    <property type="molecule type" value="mRNA"/>
</dbReference>
<dbReference type="RefSeq" id="NP_001125130.1">
    <property type="nucleotide sequence ID" value="NM_001131658.1"/>
</dbReference>
<dbReference type="RefSeq" id="NP_001128882.1">
    <property type="nucleotide sequence ID" value="NM_001135410.1"/>
</dbReference>
<dbReference type="SMR" id="Q5RD69"/>
<dbReference type="FunCoup" id="Q5RD69">
    <property type="interactions" value="753"/>
</dbReference>
<dbReference type="STRING" id="9601.ENSPPYP00000016964"/>
<dbReference type="MEROPS" id="I31.007"/>
<dbReference type="GlyCosmos" id="Q5RD69">
    <property type="glycosylation" value="2 sites, No reported glycans"/>
</dbReference>
<dbReference type="Ensembl" id="ENSPPYT00000017650.3">
    <molecule id="Q5RD69-1"/>
    <property type="protein sequence ID" value="ENSPPYP00000016964.3"/>
    <property type="gene ID" value="ENSPPYG00000015182.3"/>
</dbReference>
<dbReference type="Ensembl" id="ENSPPYT00000046963.1">
    <molecule id="Q5RD69-1"/>
    <property type="protein sequence ID" value="ENSPPYP00000044038.1"/>
    <property type="gene ID" value="ENSPPYG00000015182.3"/>
</dbReference>
<dbReference type="GeneID" id="100172015"/>
<dbReference type="KEGG" id="pon:100172015"/>
<dbReference type="CTD" id="50859"/>
<dbReference type="GeneTree" id="ENSGT00940000157828"/>
<dbReference type="InParanoid" id="Q5RD69"/>
<dbReference type="OMA" id="KQCPVIY"/>
<dbReference type="OrthoDB" id="8875634at2759"/>
<dbReference type="Proteomes" id="UP000001595">
    <property type="component" value="Chromosome 4"/>
</dbReference>
<dbReference type="GO" id="GO:0005615">
    <property type="term" value="C:extracellular space"/>
    <property type="evidence" value="ECO:0007669"/>
    <property type="project" value="TreeGrafter"/>
</dbReference>
<dbReference type="GO" id="GO:0005509">
    <property type="term" value="F:calcium ion binding"/>
    <property type="evidence" value="ECO:0007669"/>
    <property type="project" value="InterPro"/>
</dbReference>
<dbReference type="GO" id="GO:0005518">
    <property type="term" value="F:collagen binding"/>
    <property type="evidence" value="ECO:0007669"/>
    <property type="project" value="TreeGrafter"/>
</dbReference>
<dbReference type="GO" id="GO:0050840">
    <property type="term" value="F:extracellular matrix binding"/>
    <property type="evidence" value="ECO:0007669"/>
    <property type="project" value="TreeGrafter"/>
</dbReference>
<dbReference type="GO" id="GO:0005539">
    <property type="term" value="F:glycosaminoglycan binding"/>
    <property type="evidence" value="ECO:0007669"/>
    <property type="project" value="Ensembl"/>
</dbReference>
<dbReference type="GO" id="GO:0030414">
    <property type="term" value="F:peptidase inhibitor activity"/>
    <property type="evidence" value="ECO:0007669"/>
    <property type="project" value="UniProtKB-KW"/>
</dbReference>
<dbReference type="CDD" id="cd16239">
    <property type="entry name" value="EFh_SPARC_TICN3"/>
    <property type="match status" value="1"/>
</dbReference>
<dbReference type="CDD" id="cd00104">
    <property type="entry name" value="KAZAL_FS"/>
    <property type="match status" value="1"/>
</dbReference>
<dbReference type="CDD" id="cd00191">
    <property type="entry name" value="TY"/>
    <property type="match status" value="1"/>
</dbReference>
<dbReference type="FunFam" id="1.10.238.10:FF:000053">
    <property type="entry name" value="Putative testican-3 isoform 3"/>
    <property type="match status" value="1"/>
</dbReference>
<dbReference type="FunFam" id="3.30.60.30:FF:000003">
    <property type="entry name" value="SPARC/osteonectin, cwcv and kazal-like domains proteoglycan 3"/>
    <property type="match status" value="1"/>
</dbReference>
<dbReference type="FunFam" id="4.10.800.10:FF:000001">
    <property type="entry name" value="Testican-3 isoform 2"/>
    <property type="match status" value="1"/>
</dbReference>
<dbReference type="Gene3D" id="3.30.60.30">
    <property type="match status" value="1"/>
</dbReference>
<dbReference type="Gene3D" id="1.10.238.10">
    <property type="entry name" value="EF-hand"/>
    <property type="match status" value="1"/>
</dbReference>
<dbReference type="Gene3D" id="4.10.800.10">
    <property type="entry name" value="Thyroglobulin type-1"/>
    <property type="match status" value="1"/>
</dbReference>
<dbReference type="InterPro" id="IPR011992">
    <property type="entry name" value="EF-hand-dom_pair"/>
</dbReference>
<dbReference type="InterPro" id="IPR002350">
    <property type="entry name" value="Kazal_dom"/>
</dbReference>
<dbReference type="InterPro" id="IPR036058">
    <property type="entry name" value="Kazal_dom_sf"/>
</dbReference>
<dbReference type="InterPro" id="IPR019577">
    <property type="entry name" value="SPARC/Testican_Ca-bd-dom"/>
</dbReference>
<dbReference type="InterPro" id="IPR000716">
    <property type="entry name" value="Thyroglobulin_1"/>
</dbReference>
<dbReference type="InterPro" id="IPR036857">
    <property type="entry name" value="Thyroglobulin_1_sf"/>
</dbReference>
<dbReference type="PANTHER" id="PTHR13866">
    <property type="entry name" value="SPARC OSTEONECTIN"/>
    <property type="match status" value="1"/>
</dbReference>
<dbReference type="PANTHER" id="PTHR13866:SF21">
    <property type="entry name" value="TESTICAN-3"/>
    <property type="match status" value="1"/>
</dbReference>
<dbReference type="Pfam" id="PF07648">
    <property type="entry name" value="Kazal_2"/>
    <property type="match status" value="1"/>
</dbReference>
<dbReference type="Pfam" id="PF10591">
    <property type="entry name" value="SPARC_Ca_bdg"/>
    <property type="match status" value="1"/>
</dbReference>
<dbReference type="Pfam" id="PF00086">
    <property type="entry name" value="Thyroglobulin_1"/>
    <property type="match status" value="1"/>
</dbReference>
<dbReference type="SMART" id="SM00280">
    <property type="entry name" value="KAZAL"/>
    <property type="match status" value="1"/>
</dbReference>
<dbReference type="SMART" id="SM00211">
    <property type="entry name" value="TY"/>
    <property type="match status" value="1"/>
</dbReference>
<dbReference type="SUPFAM" id="SSF47473">
    <property type="entry name" value="EF-hand"/>
    <property type="match status" value="1"/>
</dbReference>
<dbReference type="SUPFAM" id="SSF100895">
    <property type="entry name" value="Kazal-type serine protease inhibitors"/>
    <property type="match status" value="1"/>
</dbReference>
<dbReference type="SUPFAM" id="SSF57610">
    <property type="entry name" value="Thyroglobulin type-1 domain"/>
    <property type="match status" value="1"/>
</dbReference>
<dbReference type="PROSITE" id="PS51465">
    <property type="entry name" value="KAZAL_2"/>
    <property type="match status" value="1"/>
</dbReference>
<dbReference type="PROSITE" id="PS00484">
    <property type="entry name" value="THYROGLOBULIN_1_1"/>
    <property type="match status" value="1"/>
</dbReference>
<dbReference type="PROSITE" id="PS51162">
    <property type="entry name" value="THYROGLOBULIN_1_2"/>
    <property type="match status" value="1"/>
</dbReference>
<name>TICN3_PONAB</name>
<sequence>MLKVSAVLCVCAAAWCSQSLAAAAAVAAAVGRSDGGNFLDDKQWLTTISQYDKEVGQWNKFRDEVEDDDFRTWSPGKPFDQALDPAKDPCLKMKCSRHKVCIAQDYQTAVCISHRRLTHRMKEAGVDHRQWRGPILSTCKQCPVVYPSPVCGSDGHTYSFQCKLEYQACVLGKQISVKCEGHCPCPSDKPTSTSRNVKRACSDLEFREVANRLRDWFKALHESGSQNKKTKTLLRPERSRFDTSILPICKDSLGWMFNRLDTNYDLLLDQSELRSIYLDKNEQCTKAFFNSCDTYKDSLISNNEWCYCFQRQQDPPCQTELSNIQKRQGVKKLLGQYIPLCDEDGYYKPTQCHGSVGQCWCVDRYGNEVMGSRINGVADCAIDFEISGDFASGDFHEWTDDEDDEDDIMNDEDEIEDDDEDEGDDDDGGDDHDGYI</sequence>
<evidence type="ECO:0000250" key="1"/>
<evidence type="ECO:0000255" key="2"/>
<evidence type="ECO:0000255" key="3">
    <source>
        <dbReference type="PROSITE-ProRule" id="PRU00500"/>
    </source>
</evidence>
<evidence type="ECO:0000255" key="4">
    <source>
        <dbReference type="PROSITE-ProRule" id="PRU00798"/>
    </source>
</evidence>
<evidence type="ECO:0000256" key="5">
    <source>
        <dbReference type="SAM" id="MobiDB-lite"/>
    </source>
</evidence>
<evidence type="ECO:0000303" key="6">
    <source ref="1"/>
</evidence>
<gene>
    <name type="primary">SPOCK3</name>
</gene>
<proteinExistence type="evidence at transcript level"/>
<comment type="function">
    <text evidence="1">May participate in diverse steps of neurogenesis. Inhibits the processing of pro-matrix metalloproteinase 2 (MMP-2) by MT1-MMP and MT3-MMP. May interfere with tumor invasion (By similarity).</text>
</comment>
<comment type="subcellular location">
    <subcellularLocation>
        <location evidence="1">Secreted</location>
        <location evidence="1">Extracellular space</location>
        <location evidence="1">Extracellular matrix</location>
    </subcellularLocation>
</comment>
<comment type="alternative products">
    <event type="alternative splicing"/>
    <isoform>
        <id>Q5RD69-1</id>
        <name>1</name>
        <sequence type="displayed"/>
    </isoform>
    <isoform>
        <id>Q5RD69-2</id>
        <name>2</name>
        <sequence type="described" ref="VSP_013634"/>
    </isoform>
</comment>
<comment type="tissue specificity">
    <text>Expressed in brain.</text>
</comment>
<comment type="PTM">
    <text evidence="1">Contains chondroitin sulfate and heparan sulfate O-linked oligosaccharides.</text>
</comment>
<reference key="1">
    <citation type="submission" date="2004-11" db="EMBL/GenBank/DDBJ databases">
        <authorList>
            <consortium name="The German cDNA consortium"/>
        </authorList>
    </citation>
    <scope>NUCLEOTIDE SEQUENCE [LARGE SCALE MRNA] (ISOFORMS 1 AND 2)</scope>
    <source>
        <tissue>Brain cortex</tissue>
    </source>
</reference>
<organism>
    <name type="scientific">Pongo abelii</name>
    <name type="common">Sumatran orangutan</name>
    <name type="synonym">Pongo pygmaeus abelii</name>
    <dbReference type="NCBI Taxonomy" id="9601"/>
    <lineage>
        <taxon>Eukaryota</taxon>
        <taxon>Metazoa</taxon>
        <taxon>Chordata</taxon>
        <taxon>Craniata</taxon>
        <taxon>Vertebrata</taxon>
        <taxon>Euteleostomi</taxon>
        <taxon>Mammalia</taxon>
        <taxon>Eutheria</taxon>
        <taxon>Euarchontoglires</taxon>
        <taxon>Primates</taxon>
        <taxon>Haplorrhini</taxon>
        <taxon>Catarrhini</taxon>
        <taxon>Hominidae</taxon>
        <taxon>Pongo</taxon>
    </lineage>
</organism>
<feature type="signal peptide" evidence="2">
    <location>
        <begin position="1"/>
        <end position="22"/>
    </location>
</feature>
<feature type="chain" id="PRO_0000026705" description="Testican-3">
    <location>
        <begin position="23"/>
        <end position="436"/>
    </location>
</feature>
<feature type="domain" description="Kazal-like" evidence="4">
    <location>
        <begin position="133"/>
        <end position="185"/>
    </location>
</feature>
<feature type="domain" description="Thyroglobulin type-1" evidence="3">
    <location>
        <begin position="314"/>
        <end position="380"/>
    </location>
</feature>
<feature type="region of interest" description="Disordered" evidence="5">
    <location>
        <begin position="393"/>
        <end position="436"/>
    </location>
</feature>
<feature type="compositionally biased region" description="Acidic residues" evidence="5">
    <location>
        <begin position="399"/>
        <end position="430"/>
    </location>
</feature>
<feature type="glycosylation site" description="O-linked (Xyl...) (glycosaminoglycan) serine" evidence="2">
    <location>
        <position position="387"/>
    </location>
</feature>
<feature type="glycosylation site" description="O-linked (Xyl...) (glycosaminoglycan) serine" evidence="2">
    <location>
        <position position="392"/>
    </location>
</feature>
<feature type="disulfide bond" evidence="1">
    <location>
        <begin position="90"/>
        <end position="101"/>
    </location>
</feature>
<feature type="disulfide bond" evidence="1">
    <location>
        <begin position="95"/>
        <end position="111"/>
    </location>
</feature>
<feature type="disulfide bond" evidence="1">
    <location>
        <begin position="139"/>
        <end position="169"/>
    </location>
</feature>
<feature type="disulfide bond" evidence="1">
    <location>
        <begin position="142"/>
        <end position="162"/>
    </location>
</feature>
<feature type="disulfide bond" evidence="1">
    <location>
        <begin position="151"/>
        <end position="183"/>
    </location>
</feature>
<feature type="disulfide bond" evidence="1">
    <location>
        <begin position="317"/>
        <end position="341"/>
    </location>
</feature>
<feature type="disulfide bond" evidence="1">
    <location>
        <begin position="352"/>
        <end position="359"/>
    </location>
</feature>
<feature type="disulfide bond" evidence="1">
    <location>
        <begin position="361"/>
        <end position="380"/>
    </location>
</feature>
<feature type="splice variant" id="VSP_013634" description="In isoform 2." evidence="6">
    <location>
        <begin position="64"/>
        <end position="66"/>
    </location>
</feature>